<organism>
    <name type="scientific">Shigella boydii serotype 18 (strain CDC 3083-94 / BS512)</name>
    <dbReference type="NCBI Taxonomy" id="344609"/>
    <lineage>
        <taxon>Bacteria</taxon>
        <taxon>Pseudomonadati</taxon>
        <taxon>Pseudomonadota</taxon>
        <taxon>Gammaproteobacteria</taxon>
        <taxon>Enterobacterales</taxon>
        <taxon>Enterobacteriaceae</taxon>
        <taxon>Shigella</taxon>
    </lineage>
</organism>
<gene>
    <name evidence="1" type="primary">mgsA</name>
    <name type="ordered locus">SbBS512_E2352</name>
</gene>
<reference key="1">
    <citation type="submission" date="2008-05" db="EMBL/GenBank/DDBJ databases">
        <title>Complete sequence of Shigella boydii serotype 18 strain BS512.</title>
        <authorList>
            <person name="Rasko D.A."/>
            <person name="Rosovitz M."/>
            <person name="Maurelli A.T."/>
            <person name="Myers G."/>
            <person name="Seshadri R."/>
            <person name="Cer R."/>
            <person name="Jiang L."/>
            <person name="Ravel J."/>
            <person name="Sebastian Y."/>
        </authorList>
    </citation>
    <scope>NUCLEOTIDE SEQUENCE [LARGE SCALE GENOMIC DNA]</scope>
    <source>
        <strain>CDC 3083-94 / BS512</strain>
    </source>
</reference>
<name>MGSA_SHIB3</name>
<feature type="chain" id="PRO_1000129010" description="Methylglyoxal synthase">
    <location>
        <begin position="1"/>
        <end position="152"/>
    </location>
</feature>
<feature type="domain" description="MGS-like" evidence="1">
    <location>
        <begin position="6"/>
        <end position="152"/>
    </location>
</feature>
<feature type="active site" description="Proton donor/acceptor" evidence="1">
    <location>
        <position position="71"/>
    </location>
</feature>
<feature type="binding site" evidence="1">
    <location>
        <position position="19"/>
    </location>
    <ligand>
        <name>substrate</name>
    </ligand>
</feature>
<feature type="binding site" evidence="1">
    <location>
        <position position="23"/>
    </location>
    <ligand>
        <name>substrate</name>
    </ligand>
</feature>
<feature type="binding site" evidence="1">
    <location>
        <begin position="45"/>
        <end position="48"/>
    </location>
    <ligand>
        <name>substrate</name>
    </ligand>
</feature>
<feature type="binding site" evidence="1">
    <location>
        <begin position="65"/>
        <end position="66"/>
    </location>
    <ligand>
        <name>substrate</name>
    </ligand>
</feature>
<feature type="binding site" evidence="1">
    <location>
        <position position="98"/>
    </location>
    <ligand>
        <name>substrate</name>
    </ligand>
</feature>
<comment type="function">
    <text evidence="1">Catalyzes the formation of methylglyoxal from dihydroxyacetone phosphate.</text>
</comment>
<comment type="catalytic activity">
    <reaction evidence="1">
        <text>dihydroxyacetone phosphate = methylglyoxal + phosphate</text>
        <dbReference type="Rhea" id="RHEA:17937"/>
        <dbReference type="ChEBI" id="CHEBI:17158"/>
        <dbReference type="ChEBI" id="CHEBI:43474"/>
        <dbReference type="ChEBI" id="CHEBI:57642"/>
        <dbReference type="EC" id="4.2.3.3"/>
    </reaction>
</comment>
<comment type="similarity">
    <text evidence="1">Belongs to the methylglyoxal synthase family.</text>
</comment>
<proteinExistence type="inferred from homology"/>
<evidence type="ECO:0000255" key="1">
    <source>
        <dbReference type="HAMAP-Rule" id="MF_00549"/>
    </source>
</evidence>
<accession>B2TTT1</accession>
<protein>
    <recommendedName>
        <fullName evidence="1">Methylglyoxal synthase</fullName>
        <shortName evidence="1">MGS</shortName>
        <ecNumber evidence="1">4.2.3.3</ecNumber>
    </recommendedName>
</protein>
<keyword id="KW-0456">Lyase</keyword>
<keyword id="KW-1185">Reference proteome</keyword>
<dbReference type="EC" id="4.2.3.3" evidence="1"/>
<dbReference type="EMBL" id="CP001063">
    <property type="protein sequence ID" value="ACD07198.1"/>
    <property type="molecule type" value="Genomic_DNA"/>
</dbReference>
<dbReference type="RefSeq" id="WP_000424181.1">
    <property type="nucleotide sequence ID" value="NC_010658.1"/>
</dbReference>
<dbReference type="SMR" id="B2TTT1"/>
<dbReference type="STRING" id="344609.SbBS512_E2352"/>
<dbReference type="GeneID" id="93776451"/>
<dbReference type="KEGG" id="sbc:SbBS512_E2352"/>
<dbReference type="HOGENOM" id="CLU_120420_0_1_6"/>
<dbReference type="Proteomes" id="UP000001030">
    <property type="component" value="Chromosome"/>
</dbReference>
<dbReference type="GO" id="GO:0005829">
    <property type="term" value="C:cytosol"/>
    <property type="evidence" value="ECO:0007669"/>
    <property type="project" value="TreeGrafter"/>
</dbReference>
<dbReference type="GO" id="GO:0008929">
    <property type="term" value="F:methylglyoxal synthase activity"/>
    <property type="evidence" value="ECO:0007669"/>
    <property type="project" value="UniProtKB-UniRule"/>
</dbReference>
<dbReference type="GO" id="GO:0019242">
    <property type="term" value="P:methylglyoxal biosynthetic process"/>
    <property type="evidence" value="ECO:0007669"/>
    <property type="project" value="UniProtKB-UniRule"/>
</dbReference>
<dbReference type="CDD" id="cd01422">
    <property type="entry name" value="MGS"/>
    <property type="match status" value="1"/>
</dbReference>
<dbReference type="FunFam" id="3.40.50.1380:FF:000002">
    <property type="entry name" value="Methylglyoxal synthase"/>
    <property type="match status" value="1"/>
</dbReference>
<dbReference type="Gene3D" id="3.40.50.1380">
    <property type="entry name" value="Methylglyoxal synthase-like domain"/>
    <property type="match status" value="1"/>
</dbReference>
<dbReference type="HAMAP" id="MF_00549">
    <property type="entry name" value="Methylglyoxal_synth"/>
    <property type="match status" value="1"/>
</dbReference>
<dbReference type="InterPro" id="IPR004363">
    <property type="entry name" value="Methylgl_synth"/>
</dbReference>
<dbReference type="InterPro" id="IPR018148">
    <property type="entry name" value="Methylglyoxal_synth_AS"/>
</dbReference>
<dbReference type="InterPro" id="IPR011607">
    <property type="entry name" value="MGS-like_dom"/>
</dbReference>
<dbReference type="InterPro" id="IPR036914">
    <property type="entry name" value="MGS-like_dom_sf"/>
</dbReference>
<dbReference type="NCBIfam" id="TIGR00160">
    <property type="entry name" value="MGSA"/>
    <property type="match status" value="1"/>
</dbReference>
<dbReference type="NCBIfam" id="NF003559">
    <property type="entry name" value="PRK05234.1"/>
    <property type="match status" value="1"/>
</dbReference>
<dbReference type="PANTHER" id="PTHR30492">
    <property type="entry name" value="METHYLGLYOXAL SYNTHASE"/>
    <property type="match status" value="1"/>
</dbReference>
<dbReference type="PANTHER" id="PTHR30492:SF0">
    <property type="entry name" value="METHYLGLYOXAL SYNTHASE"/>
    <property type="match status" value="1"/>
</dbReference>
<dbReference type="Pfam" id="PF02142">
    <property type="entry name" value="MGS"/>
    <property type="match status" value="1"/>
</dbReference>
<dbReference type="PIRSF" id="PIRSF006614">
    <property type="entry name" value="Methylglyox_syn"/>
    <property type="match status" value="1"/>
</dbReference>
<dbReference type="SMART" id="SM00851">
    <property type="entry name" value="MGS"/>
    <property type="match status" value="1"/>
</dbReference>
<dbReference type="SUPFAM" id="SSF52335">
    <property type="entry name" value="Methylglyoxal synthase-like"/>
    <property type="match status" value="1"/>
</dbReference>
<dbReference type="PROSITE" id="PS01335">
    <property type="entry name" value="METHYLGLYOXAL_SYNTH"/>
    <property type="match status" value="1"/>
</dbReference>
<dbReference type="PROSITE" id="PS51855">
    <property type="entry name" value="MGS"/>
    <property type="match status" value="1"/>
</dbReference>
<sequence>MELTTRTLPARKHIALVAHDHCKQMLMSWVERHQPLLEQHVLYATGTTGNLISRATGMNVNAMLSGPMGGDQQVGALISEGKIDVLIFFWDPLNAVPHDPDVKALLRLATVWNIPVATNVATADFIIQSPHFNDAVDILIPDYQRYLADRLK</sequence>